<protein>
    <recommendedName>
        <fullName>Transcriptional regulator MraZ</fullName>
    </recommendedName>
</protein>
<proteinExistence type="inferred from homology"/>
<dbReference type="EMBL" id="CP000143">
    <property type="protein sequence ID" value="ABA78250.1"/>
    <property type="molecule type" value="Genomic_DNA"/>
</dbReference>
<dbReference type="RefSeq" id="WP_011337234.1">
    <property type="nucleotide sequence ID" value="NZ_CP030271.1"/>
</dbReference>
<dbReference type="RefSeq" id="YP_352151.1">
    <property type="nucleotide sequence ID" value="NC_007493.2"/>
</dbReference>
<dbReference type="SMR" id="Q3J4N4"/>
<dbReference type="STRING" id="272943.RSP_2095"/>
<dbReference type="EnsemblBacteria" id="ABA78250">
    <property type="protein sequence ID" value="ABA78250"/>
    <property type="gene ID" value="RSP_2095"/>
</dbReference>
<dbReference type="GeneID" id="3719529"/>
<dbReference type="KEGG" id="rsp:RSP_2095"/>
<dbReference type="PATRIC" id="fig|272943.9.peg.988"/>
<dbReference type="eggNOG" id="COG2001">
    <property type="taxonomic scope" value="Bacteria"/>
</dbReference>
<dbReference type="OrthoDB" id="9807753at2"/>
<dbReference type="PhylomeDB" id="Q3J4N4"/>
<dbReference type="Proteomes" id="UP000002703">
    <property type="component" value="Chromosome 1"/>
</dbReference>
<dbReference type="GO" id="GO:0005737">
    <property type="term" value="C:cytoplasm"/>
    <property type="evidence" value="ECO:0007669"/>
    <property type="project" value="UniProtKB-UniRule"/>
</dbReference>
<dbReference type="GO" id="GO:0009295">
    <property type="term" value="C:nucleoid"/>
    <property type="evidence" value="ECO:0007669"/>
    <property type="project" value="UniProtKB-SubCell"/>
</dbReference>
<dbReference type="GO" id="GO:0003700">
    <property type="term" value="F:DNA-binding transcription factor activity"/>
    <property type="evidence" value="ECO:0007669"/>
    <property type="project" value="UniProtKB-UniRule"/>
</dbReference>
<dbReference type="GO" id="GO:0000976">
    <property type="term" value="F:transcription cis-regulatory region binding"/>
    <property type="evidence" value="ECO:0007669"/>
    <property type="project" value="TreeGrafter"/>
</dbReference>
<dbReference type="GO" id="GO:2000143">
    <property type="term" value="P:negative regulation of DNA-templated transcription initiation"/>
    <property type="evidence" value="ECO:0007669"/>
    <property type="project" value="TreeGrafter"/>
</dbReference>
<dbReference type="CDD" id="cd16321">
    <property type="entry name" value="MraZ_C"/>
    <property type="match status" value="1"/>
</dbReference>
<dbReference type="CDD" id="cd16320">
    <property type="entry name" value="MraZ_N"/>
    <property type="match status" value="1"/>
</dbReference>
<dbReference type="Gene3D" id="3.40.1550.20">
    <property type="entry name" value="Transcriptional regulator MraZ domain"/>
    <property type="match status" value="1"/>
</dbReference>
<dbReference type="HAMAP" id="MF_01008">
    <property type="entry name" value="MraZ"/>
    <property type="match status" value="1"/>
</dbReference>
<dbReference type="InterPro" id="IPR003444">
    <property type="entry name" value="MraZ"/>
</dbReference>
<dbReference type="InterPro" id="IPR035644">
    <property type="entry name" value="MraZ_C"/>
</dbReference>
<dbReference type="InterPro" id="IPR020603">
    <property type="entry name" value="MraZ_dom"/>
</dbReference>
<dbReference type="InterPro" id="IPR035642">
    <property type="entry name" value="MraZ_N"/>
</dbReference>
<dbReference type="InterPro" id="IPR038619">
    <property type="entry name" value="MraZ_sf"/>
</dbReference>
<dbReference type="InterPro" id="IPR007159">
    <property type="entry name" value="SpoVT-AbrB_dom"/>
</dbReference>
<dbReference type="InterPro" id="IPR037914">
    <property type="entry name" value="SpoVT-AbrB_sf"/>
</dbReference>
<dbReference type="NCBIfam" id="NF001476">
    <property type="entry name" value="PRK00326.2-2"/>
    <property type="match status" value="1"/>
</dbReference>
<dbReference type="PANTHER" id="PTHR34701">
    <property type="entry name" value="TRANSCRIPTIONAL REGULATOR MRAZ"/>
    <property type="match status" value="1"/>
</dbReference>
<dbReference type="PANTHER" id="PTHR34701:SF1">
    <property type="entry name" value="TRANSCRIPTIONAL REGULATOR MRAZ"/>
    <property type="match status" value="1"/>
</dbReference>
<dbReference type="Pfam" id="PF02381">
    <property type="entry name" value="MraZ"/>
    <property type="match status" value="1"/>
</dbReference>
<dbReference type="SUPFAM" id="SSF89447">
    <property type="entry name" value="AbrB/MazE/MraZ-like"/>
    <property type="match status" value="1"/>
</dbReference>
<dbReference type="PROSITE" id="PS51740">
    <property type="entry name" value="SPOVT_ABRB"/>
    <property type="match status" value="2"/>
</dbReference>
<organism>
    <name type="scientific">Cereibacter sphaeroides (strain ATCC 17023 / DSM 158 / JCM 6121 / CCUG 31486 / LMG 2827 / NBRC 12203 / NCIMB 8253 / ATH 2.4.1.)</name>
    <name type="common">Rhodobacter sphaeroides</name>
    <dbReference type="NCBI Taxonomy" id="272943"/>
    <lineage>
        <taxon>Bacteria</taxon>
        <taxon>Pseudomonadati</taxon>
        <taxon>Pseudomonadota</taxon>
        <taxon>Alphaproteobacteria</taxon>
        <taxon>Rhodobacterales</taxon>
        <taxon>Paracoccaceae</taxon>
        <taxon>Cereibacter</taxon>
    </lineage>
</organism>
<feature type="chain" id="PRO_0000230105" description="Transcriptional regulator MraZ">
    <location>
        <begin position="1"/>
        <end position="168"/>
    </location>
</feature>
<feature type="domain" description="SpoVT-AbrB 1" evidence="2">
    <location>
        <begin position="8"/>
        <end position="51"/>
    </location>
</feature>
<feature type="domain" description="SpoVT-AbrB 2" evidence="2">
    <location>
        <begin position="90"/>
        <end position="140"/>
    </location>
</feature>
<evidence type="ECO:0000255" key="1">
    <source>
        <dbReference type="HAMAP-Rule" id="MF_01008"/>
    </source>
</evidence>
<evidence type="ECO:0000255" key="2">
    <source>
        <dbReference type="PROSITE-ProRule" id="PRU01076"/>
    </source>
</evidence>
<name>MRAZ_CERS4</name>
<keyword id="KW-0963">Cytoplasm</keyword>
<keyword id="KW-0238">DNA-binding</keyword>
<keyword id="KW-1185">Reference proteome</keyword>
<keyword id="KW-0677">Repeat</keyword>
<keyword id="KW-0804">Transcription</keyword>
<keyword id="KW-0805">Transcription regulation</keyword>
<comment type="subunit">
    <text evidence="1">Forms oligomers.</text>
</comment>
<comment type="subcellular location">
    <subcellularLocation>
        <location evidence="1">Cytoplasm</location>
        <location evidence="1">Nucleoid</location>
    </subcellularLocation>
</comment>
<comment type="similarity">
    <text evidence="1">Belongs to the MraZ family.</text>
</comment>
<reference key="1">
    <citation type="submission" date="2005-09" db="EMBL/GenBank/DDBJ databases">
        <title>Complete sequence of chromosome 1 of Rhodobacter sphaeroides 2.4.1.</title>
        <authorList>
            <person name="Copeland A."/>
            <person name="Lucas S."/>
            <person name="Lapidus A."/>
            <person name="Barry K."/>
            <person name="Detter J.C."/>
            <person name="Glavina T."/>
            <person name="Hammon N."/>
            <person name="Israni S."/>
            <person name="Pitluck S."/>
            <person name="Richardson P."/>
            <person name="Mackenzie C."/>
            <person name="Choudhary M."/>
            <person name="Larimer F."/>
            <person name="Hauser L.J."/>
            <person name="Land M."/>
            <person name="Donohue T.J."/>
            <person name="Kaplan S."/>
        </authorList>
    </citation>
    <scope>NUCLEOTIDE SEQUENCE [LARGE SCALE GENOMIC DNA]</scope>
    <source>
        <strain>ATCC 17023 / DSM 158 / JCM 6121 / CCUG 31486 / LMG 2827 / NBRC 12203 / NCIMB 8253 / ATH 2.4.1.</strain>
    </source>
</reference>
<accession>Q3J4N4</accession>
<sequence length="168" mass="18733">MAEAFRGEYNQKVDAKARVSIPAPFRRVIEAGDPKFSGGRSSFVLVYGGDRSYVECYTISEMERIEERIRSLPMGTPKRRYLERNMITLALNMELDEDGRIVLPPKGREKLGISPDELKGGTEATFAGTLNKFQIWKADTYAAELAAEEEVLLPPGADMLSLLEETGL</sequence>
<gene>
    <name evidence="1" type="primary">mraZ</name>
    <name type="ordered locus">RHOS4_06820</name>
    <name type="ORF">RSP_2095</name>
</gene>